<proteinExistence type="inferred from homology"/>
<accession>B2TII3</accession>
<evidence type="ECO:0000255" key="1">
    <source>
        <dbReference type="HAMAP-Rule" id="MF_00374"/>
    </source>
</evidence>
<evidence type="ECO:0000305" key="2"/>
<feature type="chain" id="PRO_1000121749" description="Large ribosomal subunit protein uL29">
    <location>
        <begin position="1"/>
        <end position="70"/>
    </location>
</feature>
<keyword id="KW-0687">Ribonucleoprotein</keyword>
<keyword id="KW-0689">Ribosomal protein</keyword>
<sequence length="70" mass="8196">MKARELKELRSSNPQDLTLKLGDLKAELFNLRFQLATGQLENPMRIREVKKSIAQIKTILREDEMRALEQ</sequence>
<organism>
    <name type="scientific">Clostridium botulinum (strain Eklund 17B / Type B)</name>
    <dbReference type="NCBI Taxonomy" id="935198"/>
    <lineage>
        <taxon>Bacteria</taxon>
        <taxon>Bacillati</taxon>
        <taxon>Bacillota</taxon>
        <taxon>Clostridia</taxon>
        <taxon>Eubacteriales</taxon>
        <taxon>Clostridiaceae</taxon>
        <taxon>Clostridium</taxon>
    </lineage>
</organism>
<reference key="1">
    <citation type="submission" date="2008-04" db="EMBL/GenBank/DDBJ databases">
        <title>Complete sequence of Clostridium botulinum strain Eklund.</title>
        <authorList>
            <person name="Brinkac L.M."/>
            <person name="Brown J.L."/>
            <person name="Bruce D."/>
            <person name="Detter C."/>
            <person name="Munk C."/>
            <person name="Smith L.A."/>
            <person name="Smith T.J."/>
            <person name="Sutton G."/>
            <person name="Brettin T.S."/>
        </authorList>
    </citation>
    <scope>NUCLEOTIDE SEQUENCE [LARGE SCALE GENOMIC DNA]</scope>
    <source>
        <strain>Eklund 17B / Type B</strain>
    </source>
</reference>
<gene>
    <name evidence="1" type="primary">rpmC</name>
    <name type="ordered locus">CLL_A0246</name>
</gene>
<protein>
    <recommendedName>
        <fullName evidence="1">Large ribosomal subunit protein uL29</fullName>
    </recommendedName>
    <alternativeName>
        <fullName evidence="2">50S ribosomal protein L29</fullName>
    </alternativeName>
</protein>
<comment type="similarity">
    <text evidence="1">Belongs to the universal ribosomal protein uL29 family.</text>
</comment>
<dbReference type="EMBL" id="CP001056">
    <property type="protein sequence ID" value="ACD22383.1"/>
    <property type="molecule type" value="Genomic_DNA"/>
</dbReference>
<dbReference type="SMR" id="B2TII3"/>
<dbReference type="KEGG" id="cbk:CLL_A0246"/>
<dbReference type="PATRIC" id="fig|935198.13.peg.221"/>
<dbReference type="HOGENOM" id="CLU_158491_5_2_9"/>
<dbReference type="Proteomes" id="UP000001195">
    <property type="component" value="Chromosome"/>
</dbReference>
<dbReference type="GO" id="GO:0022625">
    <property type="term" value="C:cytosolic large ribosomal subunit"/>
    <property type="evidence" value="ECO:0007669"/>
    <property type="project" value="TreeGrafter"/>
</dbReference>
<dbReference type="GO" id="GO:0003735">
    <property type="term" value="F:structural constituent of ribosome"/>
    <property type="evidence" value="ECO:0007669"/>
    <property type="project" value="InterPro"/>
</dbReference>
<dbReference type="GO" id="GO:0006412">
    <property type="term" value="P:translation"/>
    <property type="evidence" value="ECO:0007669"/>
    <property type="project" value="UniProtKB-UniRule"/>
</dbReference>
<dbReference type="CDD" id="cd00427">
    <property type="entry name" value="Ribosomal_L29_HIP"/>
    <property type="match status" value="1"/>
</dbReference>
<dbReference type="FunFam" id="1.10.287.310:FF:000001">
    <property type="entry name" value="50S ribosomal protein L29"/>
    <property type="match status" value="1"/>
</dbReference>
<dbReference type="Gene3D" id="1.10.287.310">
    <property type="match status" value="1"/>
</dbReference>
<dbReference type="HAMAP" id="MF_00374">
    <property type="entry name" value="Ribosomal_uL29"/>
    <property type="match status" value="1"/>
</dbReference>
<dbReference type="InterPro" id="IPR050063">
    <property type="entry name" value="Ribosomal_protein_uL29"/>
</dbReference>
<dbReference type="InterPro" id="IPR001854">
    <property type="entry name" value="Ribosomal_uL29"/>
</dbReference>
<dbReference type="InterPro" id="IPR018254">
    <property type="entry name" value="Ribosomal_uL29_CS"/>
</dbReference>
<dbReference type="InterPro" id="IPR036049">
    <property type="entry name" value="Ribosomal_uL29_sf"/>
</dbReference>
<dbReference type="NCBIfam" id="TIGR00012">
    <property type="entry name" value="L29"/>
    <property type="match status" value="1"/>
</dbReference>
<dbReference type="PANTHER" id="PTHR10916">
    <property type="entry name" value="60S RIBOSOMAL PROTEIN L35/50S RIBOSOMAL PROTEIN L29"/>
    <property type="match status" value="1"/>
</dbReference>
<dbReference type="PANTHER" id="PTHR10916:SF0">
    <property type="entry name" value="LARGE RIBOSOMAL SUBUNIT PROTEIN UL29C"/>
    <property type="match status" value="1"/>
</dbReference>
<dbReference type="Pfam" id="PF00831">
    <property type="entry name" value="Ribosomal_L29"/>
    <property type="match status" value="1"/>
</dbReference>
<dbReference type="SUPFAM" id="SSF46561">
    <property type="entry name" value="Ribosomal protein L29 (L29p)"/>
    <property type="match status" value="1"/>
</dbReference>
<dbReference type="PROSITE" id="PS00579">
    <property type="entry name" value="RIBOSOMAL_L29"/>
    <property type="match status" value="1"/>
</dbReference>
<name>RL29_CLOBB</name>